<accession>Q2VLH6</accession>
<accession>A6H691</accession>
<accession>Q2VLH5</accession>
<accession>Q99MX8</accession>
<organism>
    <name type="scientific">Mus musculus</name>
    <name type="common">Mouse</name>
    <dbReference type="NCBI Taxonomy" id="10090"/>
    <lineage>
        <taxon>Eukaryota</taxon>
        <taxon>Metazoa</taxon>
        <taxon>Chordata</taxon>
        <taxon>Craniata</taxon>
        <taxon>Vertebrata</taxon>
        <taxon>Euteleostomi</taxon>
        <taxon>Mammalia</taxon>
        <taxon>Eutheria</taxon>
        <taxon>Euarchontoglires</taxon>
        <taxon>Glires</taxon>
        <taxon>Rodentia</taxon>
        <taxon>Myomorpha</taxon>
        <taxon>Muroidea</taxon>
        <taxon>Muridae</taxon>
        <taxon>Murinae</taxon>
        <taxon>Mus</taxon>
        <taxon>Mus</taxon>
    </lineage>
</organism>
<comment type="function">
    <text evidence="1">Involved in clearance and endocytosis of hemoglobin/haptoglobin complexes by macrophages and may thereby protect tissues from free hemoglobin-mediated oxidative damage. May play a role in the uptake and recycling of iron, via endocytosis of hemoglobin/haptoglobin and subsequent breakdown of heme. Binds hemoglobin/haptoglobin complexes in a calcium-dependent and pH-dependent manner. Induces a cascade of intracellular signals that involves tyrosine kinase-dependent calcium mobilization, inositol triphosphate production and secretion of IL6 and CSF1 (By similarity).</text>
</comment>
<comment type="function">
    <text evidence="1">After shedding, the soluble form (sCD163) may play an anti-inflammatory role.</text>
</comment>
<comment type="subunit">
    <text evidence="1">Interacts with CSNK2B.</text>
</comment>
<comment type="subcellular location">
    <molecule>Soluble CD163</molecule>
    <subcellularLocation>
        <location evidence="2">Secreted</location>
    </subcellularLocation>
</comment>
<comment type="subcellular location">
    <subcellularLocation>
        <location evidence="2">Cell membrane</location>
        <topology evidence="2">Single-pass type I membrane protein</topology>
    </subcellularLocation>
</comment>
<comment type="alternative products">
    <event type="alternative splicing"/>
    <isoform>
        <id>Q2VLH6-1</id>
        <name>1</name>
        <name>CD163v2</name>
        <sequence type="displayed"/>
    </isoform>
    <isoform>
        <id>Q2VLH6-2</id>
        <name>2</name>
        <name>CD163v3</name>
        <sequence type="described" ref="VSP_019016"/>
    </isoform>
</comment>
<comment type="tissue specificity">
    <text evidence="5">Expressed in monocytes and mature macrophages such as Kupffer cells in the liver, red pulp macrophages in the spleen and mesenteric lymph nodes.</text>
</comment>
<comment type="induction">
    <text evidence="5">Induced by anti-inflammatory mediators such as glucocorticoids and IL10; suppressed by IL4.</text>
</comment>
<comment type="domain">
    <text evidence="1">The SRCR domain 3 mediates calcium-sensitive interaction with hemoglobin/haptoglobin complexes.</text>
</comment>
<comment type="PTM">
    <text evidence="1">A soluble form (sCD163) is produced by proteolytic shedding which can be induced by lipopolysaccharide, phorbol ester and Fc region of immunoglobulin gamma. This cleavage is dependent on protein kinase C and tyrosine kinases and can be blocked by protease inhibitors. The shedding is inhibited by the tissue inhibitor of metalloproteinase TIMP3, and thus probably induced by membrane-bound metalloproteinases ADAMs (By similarity).</text>
</comment>
<sequence>MGGHRMVLLGGAGSPGCKRFVHLGFFVVAVSSLLSASAVTNAPGEMKKELRLAGGENNCSGRVELKIHDKWGTVCSNGWSMNEVSVVCQQLGCPTSIKALGWANSSAGSGYIWMDKVSCTGNESALWDCKHDGWGKHNCTHEKDAGVTCSDGSNLEMRLVNSAGHRCLGRVEIKFQGKWGTVCDDNFSKDHASVICKQLGCGSAISFSGSAKLGAGSGPIWLDDLACNGNESALWDCKHRGWGKHNCDHAEDVGVICLEGADLSLRLVDGVSRCSGRLEVRFQGEWGTVCDDNWDLRDASVVCKQLGCPTAISAIGRVNASEGSGQIWLDNISCEGHEATLWECKHQEWGKHYCHHREDAGVTCSDGADLELRLVGGGSRCAGIVEVEIQKLTGKMCSRGWTLADADVVCRQLGCGSALQTQAKIYSKTGATNTWLFPGSCNGNETTFWQCKNWQWGGLSCDNFEEAKVTCSGHREPRLVGGEIPCSGRVEVKHGDVWGSVCDFDLSLEAASVVCRELQCGTVVSILGGAHFGEGSGQIWGEEFQCSGDESHLSLCSVAPPLDRTCTHSRDVSVVCSRYIDIRLAGGESSCEGRVELKTLGAWGPLCSSHWDMEDAHVLCQQLKCGVAQSIPEGAHFGKGAGQVWSHMFHCTGTEEHIGDCLMTALGAPTCSEGQVASVICSGNQSQTLLPCSSLSPVQTTSSTIPKESEVPCIASGQLRLVGGGGRCAGRVEVYHEGSWGTVCDDNWDMTDANVVCKQLDCGVAINATGSAYFGEGAGAIWLDEVICTGKESHIWQCHSHGWGRHNCRHKEDAGVICSEFMSLRLTNEAHKENCTGRLEVFYNGTWGSIGSSNMSPTTVGVVCRQLGCADNGTVKPIPSDKTPSRPMWVDRVQCPKGVDTLWQCPSSPWKQRQASPSSQESWIICDNKIRLQEGHTDCSGRVEIWHKGSWGTVCDDSWDLNDAKVVCKQLGCGQAVKALKEAAFGPGTGPIWLNEIKCRGNESSLWDCPAKPWSHSDCGHKEDASIQCLPKMTSESHHGTGHPTLTALLVCGAILLVLLIVFLLWTLKRRQIQRLTVSSRGEVLIHQVQYQEMDSKADDLDLLKSSGVIQRHTEKENDNL</sequence>
<evidence type="ECO:0000250" key="1"/>
<evidence type="ECO:0000250" key="2">
    <source>
        <dbReference type="UniProtKB" id="Q86VB7"/>
    </source>
</evidence>
<evidence type="ECO:0000255" key="3"/>
<evidence type="ECO:0000255" key="4">
    <source>
        <dbReference type="PROSITE-ProRule" id="PRU00196"/>
    </source>
</evidence>
<evidence type="ECO:0000269" key="5">
    <source>
    </source>
</evidence>
<evidence type="ECO:0000303" key="6">
    <source ref="2"/>
</evidence>
<evidence type="ECO:0000305" key="7"/>
<gene>
    <name type="primary">Cd163</name>
    <name type="synonym">M130</name>
</gene>
<proteinExistence type="evidence at protein level"/>
<feature type="signal peptide" evidence="3">
    <location>
        <begin position="1"/>
        <end position="38"/>
    </location>
</feature>
<feature type="chain" id="PRO_0000238940" description="Scavenger receptor cysteine-rich type 1 protein M130">
    <location>
        <begin position="39"/>
        <end position="1121"/>
    </location>
</feature>
<feature type="chain" id="PRO_0000238941" description="Soluble CD163">
    <location>
        <begin position="39"/>
        <end status="unknown"/>
    </location>
</feature>
<feature type="topological domain" description="Extracellular" evidence="3">
    <location>
        <begin position="39"/>
        <end position="1045"/>
    </location>
</feature>
<feature type="transmembrane region" description="Helical" evidence="3">
    <location>
        <begin position="1046"/>
        <end position="1066"/>
    </location>
</feature>
<feature type="topological domain" description="Cytoplasmic" evidence="3">
    <location>
        <begin position="1067"/>
        <end position="1121"/>
    </location>
</feature>
<feature type="domain" description="SRCR 1" evidence="4">
    <location>
        <begin position="50"/>
        <end position="150"/>
    </location>
</feature>
<feature type="domain" description="SRCR 2" evidence="4">
    <location>
        <begin position="157"/>
        <end position="258"/>
    </location>
</feature>
<feature type="domain" description="SRCR 3" evidence="4">
    <location>
        <begin position="265"/>
        <end position="365"/>
    </location>
</feature>
<feature type="domain" description="SRCR 4" evidence="4">
    <location>
        <begin position="372"/>
        <end position="472"/>
    </location>
</feature>
<feature type="domain" description="SRCR 5" evidence="4">
    <location>
        <begin position="477"/>
        <end position="577"/>
    </location>
</feature>
<feature type="domain" description="SRCR 6" evidence="4">
    <location>
        <begin position="582"/>
        <end position="682"/>
    </location>
</feature>
<feature type="domain" description="SRCR 7" evidence="4">
    <location>
        <begin position="719"/>
        <end position="819"/>
    </location>
</feature>
<feature type="domain" description="SRCR 8" evidence="4">
    <location>
        <begin position="824"/>
        <end position="927"/>
    </location>
</feature>
<feature type="domain" description="SRCR 9" evidence="4">
    <location>
        <begin position="930"/>
        <end position="1030"/>
    </location>
</feature>
<feature type="short sequence motif" description="Internalization signal">
    <location>
        <begin position="1091"/>
        <end position="1094"/>
    </location>
</feature>
<feature type="glycosylation site" description="N-linked (GlcNAc...) asparagine" evidence="3">
    <location>
        <position position="104"/>
    </location>
</feature>
<feature type="glycosylation site" description="N-linked (GlcNAc...) asparagine" evidence="3">
    <location>
        <position position="138"/>
    </location>
</feature>
<feature type="disulfide bond" evidence="4">
    <location>
        <begin position="75"/>
        <end position="139"/>
    </location>
</feature>
<feature type="disulfide bond" evidence="4">
    <location>
        <begin position="88"/>
        <end position="149"/>
    </location>
</feature>
<feature type="disulfide bond" evidence="4">
    <location>
        <begin position="119"/>
        <end position="129"/>
    </location>
</feature>
<feature type="disulfide bond" evidence="4">
    <location>
        <begin position="183"/>
        <end position="247"/>
    </location>
</feature>
<feature type="disulfide bond" evidence="4">
    <location>
        <begin position="196"/>
        <end position="257"/>
    </location>
</feature>
<feature type="disulfide bond" evidence="4">
    <location>
        <begin position="227"/>
        <end position="237"/>
    </location>
</feature>
<feature type="disulfide bond" evidence="4">
    <location>
        <begin position="290"/>
        <end position="354"/>
    </location>
</feature>
<feature type="disulfide bond" evidence="4">
    <location>
        <begin position="303"/>
        <end position="364"/>
    </location>
</feature>
<feature type="disulfide bond" evidence="4">
    <location>
        <begin position="334"/>
        <end position="344"/>
    </location>
</feature>
<feature type="disulfide bond" evidence="4">
    <location>
        <begin position="397"/>
        <end position="461"/>
    </location>
</feature>
<feature type="disulfide bond" evidence="4">
    <location>
        <begin position="410"/>
        <end position="471"/>
    </location>
</feature>
<feature type="disulfide bond" evidence="4">
    <location>
        <begin position="441"/>
        <end position="451"/>
    </location>
</feature>
<feature type="disulfide bond" evidence="4">
    <location>
        <begin position="502"/>
        <end position="566"/>
    </location>
</feature>
<feature type="disulfide bond" evidence="4">
    <location>
        <begin position="515"/>
        <end position="576"/>
    </location>
</feature>
<feature type="disulfide bond" evidence="4">
    <location>
        <begin position="546"/>
        <end position="556"/>
    </location>
</feature>
<feature type="disulfide bond" evidence="4">
    <location>
        <begin position="607"/>
        <end position="671"/>
    </location>
</feature>
<feature type="disulfide bond" evidence="4">
    <location>
        <begin position="620"/>
        <end position="681"/>
    </location>
</feature>
<feature type="disulfide bond" evidence="4">
    <location>
        <begin position="651"/>
        <end position="661"/>
    </location>
</feature>
<feature type="disulfide bond" evidence="4">
    <location>
        <begin position="744"/>
        <end position="808"/>
    </location>
</feature>
<feature type="disulfide bond" evidence="4">
    <location>
        <begin position="757"/>
        <end position="818"/>
    </location>
</feature>
<feature type="disulfide bond" evidence="4">
    <location>
        <begin position="788"/>
        <end position="798"/>
    </location>
</feature>
<feature type="disulfide bond" evidence="4">
    <location>
        <begin position="864"/>
        <end position="926"/>
    </location>
</feature>
<feature type="disulfide bond" evidence="4">
    <location>
        <begin position="895"/>
        <end position="905"/>
    </location>
</feature>
<feature type="disulfide bond" evidence="4">
    <location>
        <begin position="955"/>
        <end position="1019"/>
    </location>
</feature>
<feature type="disulfide bond" evidence="4">
    <location>
        <begin position="968"/>
        <end position="1029"/>
    </location>
</feature>
<feature type="disulfide bond" evidence="4">
    <location>
        <begin position="999"/>
        <end position="1009"/>
    </location>
</feature>
<feature type="splice variant" id="VSP_019016" description="In isoform 2." evidence="6">
    <original>GVIQRHTEKENDNL</original>
    <variation>ENSNNSYDFNDDGLTSLSKYLPISGIKKGSFRGTLRRKMIIYNPLRLEFKKP</variation>
    <location>
        <begin position="1108"/>
        <end position="1121"/>
    </location>
</feature>
<feature type="sequence conflict" description="In Ref. 2; AAY99764." evidence="7" ref="2">
    <original>V</original>
    <variation>M</variation>
    <location>
        <position position="492"/>
    </location>
</feature>
<feature type="sequence conflict" description="In Ref. 1; AAK16065." evidence="7" ref="1">
    <original>Y</original>
    <variation>C</variation>
    <location>
        <position position="735"/>
    </location>
</feature>
<feature type="sequence conflict" description="In Ref. 2; AAY99763." evidence="7" ref="2">
    <original>N</original>
    <variation>S</variation>
    <location>
        <position position="834"/>
    </location>
</feature>
<feature type="sequence conflict" description="In Ref. 2; AAY99763." evidence="7" ref="2">
    <original>S</original>
    <variation>F</variation>
    <location>
        <position position="950"/>
    </location>
</feature>
<feature type="sequence conflict" description="In Ref. 1; AAK16065." evidence="7" ref="1">
    <original>Q</original>
    <variation>R</variation>
    <location>
        <position position="1072"/>
    </location>
</feature>
<protein>
    <recommendedName>
        <fullName>Scavenger receptor cysteine-rich type 1 protein M130</fullName>
    </recommendedName>
    <cdAntigenName>CD163</cdAntigenName>
    <component>
        <recommendedName>
            <fullName>Soluble CD163</fullName>
            <shortName>sCD163</shortName>
        </recommendedName>
    </component>
</protein>
<name>C163A_MOUSE</name>
<keyword id="KW-0011">Acute phase</keyword>
<keyword id="KW-0025">Alternative splicing</keyword>
<keyword id="KW-1003">Cell membrane</keyword>
<keyword id="KW-1015">Disulfide bond</keyword>
<keyword id="KW-0325">Glycoprotein</keyword>
<keyword id="KW-0395">Inflammatory response</keyword>
<keyword id="KW-0472">Membrane</keyword>
<keyword id="KW-1185">Reference proteome</keyword>
<keyword id="KW-0677">Repeat</keyword>
<keyword id="KW-0964">Secreted</keyword>
<keyword id="KW-0732">Signal</keyword>
<keyword id="KW-0812">Transmembrane</keyword>
<keyword id="KW-1133">Transmembrane helix</keyword>
<reference key="1">
    <citation type="journal article" date="2001" name="Immunogenetics">
        <title>Molecular cloning and characterization of the mouse CD163 homologue, a highly glucocorticoid-inducible member of the scavenger receptor cysteine-rich family.</title>
        <authorList>
            <person name="Schaer D.J."/>
            <person name="Boretti F.S."/>
            <person name="Hongegger A."/>
            <person name="Poehler D."/>
            <person name="Linnscheid P."/>
            <person name="Staege H."/>
            <person name="Mueller C."/>
            <person name="Schoedon G."/>
            <person name="Schaffner A."/>
        </authorList>
    </citation>
    <scope>NUCLEOTIDE SEQUENCE [MRNA] (ISOFORM 1)</scope>
    <scope>INDUCTION</scope>
    <scope>TISSUE SPECIFICITY</scope>
</reference>
<reference key="2">
    <citation type="submission" date="2005-05" db="EMBL/GenBank/DDBJ databases">
        <title>Scavenger receptor cd163 is a cell permissive factor for infection with porcine reproductive and respiratory syndrome viruses.</title>
        <authorList>
            <person name="Welch S.-K.W."/>
            <person name="Calvert J.G."/>
            <person name="Slade D.E."/>
            <person name="Shields S.L."/>
        </authorList>
    </citation>
    <scope>NUCLEOTIDE SEQUENCE [MRNA] (ISOFORMS 1 AND 2)</scope>
    <source>
        <strain>BALB/cJ</strain>
    </source>
</reference>
<reference key="3">
    <citation type="submission" date="2005-07" db="EMBL/GenBank/DDBJ databases">
        <authorList>
            <person name="Mural R.J."/>
            <person name="Adams M.D."/>
            <person name="Myers E.W."/>
            <person name="Smith H.O."/>
            <person name="Venter J.C."/>
        </authorList>
    </citation>
    <scope>NUCLEOTIDE SEQUENCE [LARGE SCALE GENOMIC DNA]</scope>
</reference>
<reference key="4">
    <citation type="journal article" date="2004" name="Genome Res.">
        <title>The status, quality, and expansion of the NIH full-length cDNA project: the Mammalian Gene Collection (MGC).</title>
        <authorList>
            <consortium name="The MGC Project Team"/>
        </authorList>
    </citation>
    <scope>NUCLEOTIDE SEQUENCE [LARGE SCALE MRNA]</scope>
    <source>
        <tissue>Brain</tissue>
    </source>
</reference>
<reference key="5">
    <citation type="journal article" date="2010" name="Cell">
        <title>A tissue-specific atlas of mouse protein phosphorylation and expression.</title>
        <authorList>
            <person name="Huttlin E.L."/>
            <person name="Jedrychowski M.P."/>
            <person name="Elias J.E."/>
            <person name="Goswami T."/>
            <person name="Rad R."/>
            <person name="Beausoleil S.A."/>
            <person name="Villen J."/>
            <person name="Haas W."/>
            <person name="Sowa M.E."/>
            <person name="Gygi S.P."/>
        </authorList>
    </citation>
    <scope>IDENTIFICATION BY MASS SPECTROMETRY [LARGE SCALE ANALYSIS]</scope>
    <source>
        <tissue>Brown adipose tissue</tissue>
        <tissue>Heart</tissue>
        <tissue>Liver</tissue>
        <tissue>Lung</tissue>
        <tissue>Pancreas</tissue>
        <tissue>Spleen</tissue>
    </source>
</reference>
<dbReference type="EMBL" id="AF274883">
    <property type="protein sequence ID" value="AAK16065.1"/>
    <property type="molecule type" value="mRNA"/>
</dbReference>
<dbReference type="EMBL" id="DQ058616">
    <property type="protein sequence ID" value="AAY99763.1"/>
    <property type="molecule type" value="mRNA"/>
</dbReference>
<dbReference type="EMBL" id="DQ058617">
    <property type="protein sequence ID" value="AAY99764.1"/>
    <property type="molecule type" value="mRNA"/>
</dbReference>
<dbReference type="EMBL" id="CH466523">
    <property type="protein sequence ID" value="EDK99729.1"/>
    <property type="molecule type" value="Genomic_DNA"/>
</dbReference>
<dbReference type="EMBL" id="BC145793">
    <property type="protein sequence ID" value="AAI45794.1"/>
    <property type="molecule type" value="mRNA"/>
</dbReference>
<dbReference type="CCDS" id="CCDS20516.1">
    <molecule id="Q2VLH6-1"/>
</dbReference>
<dbReference type="CCDS" id="CCDS51905.1">
    <molecule id="Q2VLH6-2"/>
</dbReference>
<dbReference type="RefSeq" id="NP_001163866.1">
    <molecule id="Q2VLH6-2"/>
    <property type="nucleotide sequence ID" value="NM_001170395.1"/>
</dbReference>
<dbReference type="RefSeq" id="NP_444324.2">
    <molecule id="Q2VLH6-1"/>
    <property type="nucleotide sequence ID" value="NM_053094.2"/>
</dbReference>
<dbReference type="SMR" id="Q2VLH6"/>
<dbReference type="FunCoup" id="Q2VLH6">
    <property type="interactions" value="346"/>
</dbReference>
<dbReference type="STRING" id="10090.ENSMUSP00000108160"/>
<dbReference type="GlyConnect" id="2428">
    <molecule id="Q2VLH6-2"/>
    <property type="glycosylation" value="2 N-Linked glycans (1 site)"/>
</dbReference>
<dbReference type="GlyCosmos" id="Q2VLH6">
    <property type="glycosylation" value="3 sites, 2 glycans"/>
</dbReference>
<dbReference type="GlyGen" id="Q2VLH6">
    <property type="glycosylation" value="5 sites, 4 N-linked glycans (3 sites)"/>
</dbReference>
<dbReference type="iPTMnet" id="Q2VLH6"/>
<dbReference type="PhosphoSitePlus" id="Q2VLH6"/>
<dbReference type="SwissPalm" id="Q2VLH6"/>
<dbReference type="PaxDb" id="10090-ENSMUSP00000108160"/>
<dbReference type="ProteomicsDB" id="265458">
    <molecule id="Q2VLH6-1"/>
</dbReference>
<dbReference type="ProteomicsDB" id="265459">
    <molecule id="Q2VLH6-2"/>
</dbReference>
<dbReference type="Antibodypedia" id="3721">
    <property type="antibodies" value="1652 antibodies from 45 providers"/>
</dbReference>
<dbReference type="DNASU" id="93671"/>
<dbReference type="Ensembl" id="ENSMUST00000032234.5">
    <molecule id="Q2VLH6-1"/>
    <property type="protein sequence ID" value="ENSMUSP00000032234.3"/>
    <property type="gene ID" value="ENSMUSG00000008845.10"/>
</dbReference>
<dbReference type="Ensembl" id="ENSMUST00000112541.8">
    <molecule id="Q2VLH6-2"/>
    <property type="protein sequence ID" value="ENSMUSP00000108160.3"/>
    <property type="gene ID" value="ENSMUSG00000008845.10"/>
</dbReference>
<dbReference type="GeneID" id="93671"/>
<dbReference type="KEGG" id="mmu:93671"/>
<dbReference type="UCSC" id="uc009dqn.2">
    <molecule id="Q2VLH6-1"/>
    <property type="organism name" value="mouse"/>
</dbReference>
<dbReference type="AGR" id="MGI:2135946"/>
<dbReference type="CTD" id="9332"/>
<dbReference type="MGI" id="MGI:2135946">
    <property type="gene designation" value="Cd163"/>
</dbReference>
<dbReference type="VEuPathDB" id="HostDB:ENSMUSG00000008845"/>
<dbReference type="eggNOG" id="ENOG502QQ5W">
    <property type="taxonomic scope" value="Eukaryota"/>
</dbReference>
<dbReference type="GeneTree" id="ENSGT00940000155987"/>
<dbReference type="HOGENOM" id="CLU_002555_0_1_1"/>
<dbReference type="InParanoid" id="Q2VLH6"/>
<dbReference type="OMA" id="AGENKCS"/>
<dbReference type="OrthoDB" id="536948at2759"/>
<dbReference type="TreeFam" id="TF329295"/>
<dbReference type="Reactome" id="R-MMU-2168880">
    <property type="pathway name" value="Scavenging of heme from plasma"/>
</dbReference>
<dbReference type="BioGRID-ORCS" id="93671">
    <property type="hits" value="1 hit in 77 CRISPR screens"/>
</dbReference>
<dbReference type="PRO" id="PR:Q2VLH6"/>
<dbReference type="Proteomes" id="UP000000589">
    <property type="component" value="Chromosome 6"/>
</dbReference>
<dbReference type="RNAct" id="Q2VLH6">
    <property type="molecule type" value="protein"/>
</dbReference>
<dbReference type="Bgee" id="ENSMUSG00000008845">
    <property type="expression patterns" value="Expressed in stroma of bone marrow and 101 other cell types or tissues"/>
</dbReference>
<dbReference type="ExpressionAtlas" id="Q2VLH6">
    <property type="expression patterns" value="baseline and differential"/>
</dbReference>
<dbReference type="GO" id="GO:0009897">
    <property type="term" value="C:external side of plasma membrane"/>
    <property type="evidence" value="ECO:0007669"/>
    <property type="project" value="Ensembl"/>
</dbReference>
<dbReference type="GO" id="GO:0005576">
    <property type="term" value="C:extracellular region"/>
    <property type="evidence" value="ECO:0007669"/>
    <property type="project" value="UniProtKB-SubCell"/>
</dbReference>
<dbReference type="GO" id="GO:0097110">
    <property type="term" value="F:scaffold protein binding"/>
    <property type="evidence" value="ECO:0007669"/>
    <property type="project" value="Ensembl"/>
</dbReference>
<dbReference type="GO" id="GO:0005044">
    <property type="term" value="F:scavenger receptor activity"/>
    <property type="evidence" value="ECO:0000266"/>
    <property type="project" value="MGI"/>
</dbReference>
<dbReference type="GO" id="GO:0006953">
    <property type="term" value="P:acute-phase response"/>
    <property type="evidence" value="ECO:0007669"/>
    <property type="project" value="UniProtKB-KW"/>
</dbReference>
<dbReference type="FunFam" id="3.10.250.10:FF:000012">
    <property type="entry name" value="CD163 molecule like 1"/>
    <property type="match status" value="1"/>
</dbReference>
<dbReference type="FunFam" id="3.10.250.10:FF:000003">
    <property type="entry name" value="Deleted in malignant brain tumors 1"/>
    <property type="match status" value="1"/>
</dbReference>
<dbReference type="FunFam" id="3.10.250.10:FF:000002">
    <property type="entry name" value="Scavenger receptor cysteine-rich type 1 protein M130"/>
    <property type="match status" value="4"/>
</dbReference>
<dbReference type="FunFam" id="3.10.250.10:FF:000004">
    <property type="entry name" value="Scavenger receptor cysteine-rich type 1 protein M130"/>
    <property type="match status" value="2"/>
</dbReference>
<dbReference type="FunFam" id="3.10.250.10:FF:000015">
    <property type="entry name" value="Scavenger receptor cysteine-rich type 1 protein M130"/>
    <property type="match status" value="1"/>
</dbReference>
<dbReference type="Gene3D" id="3.10.250.10">
    <property type="entry name" value="SRCR-like domain"/>
    <property type="match status" value="9"/>
</dbReference>
<dbReference type="InterPro" id="IPR001190">
    <property type="entry name" value="SRCR"/>
</dbReference>
<dbReference type="InterPro" id="IPR036772">
    <property type="entry name" value="SRCR-like_dom_sf"/>
</dbReference>
<dbReference type="PANTHER" id="PTHR19331:SF468">
    <property type="entry name" value="SCAVENGER RECEPTOR CYSTEINE-RICH TYPE 1 PROTEIN M160"/>
    <property type="match status" value="1"/>
</dbReference>
<dbReference type="PANTHER" id="PTHR19331">
    <property type="entry name" value="SCAVENGER RECEPTOR DOMAIN-CONTAINING"/>
    <property type="match status" value="1"/>
</dbReference>
<dbReference type="Pfam" id="PF00530">
    <property type="entry name" value="SRCR"/>
    <property type="match status" value="9"/>
</dbReference>
<dbReference type="PRINTS" id="PR00258">
    <property type="entry name" value="SPERACTRCPTR"/>
</dbReference>
<dbReference type="SMART" id="SM00202">
    <property type="entry name" value="SR"/>
    <property type="match status" value="9"/>
</dbReference>
<dbReference type="SUPFAM" id="SSF56487">
    <property type="entry name" value="SRCR-like"/>
    <property type="match status" value="9"/>
</dbReference>
<dbReference type="PROSITE" id="PS00420">
    <property type="entry name" value="SRCR_1"/>
    <property type="match status" value="3"/>
</dbReference>
<dbReference type="PROSITE" id="PS50287">
    <property type="entry name" value="SRCR_2"/>
    <property type="match status" value="9"/>
</dbReference>